<evidence type="ECO:0000255" key="1">
    <source>
        <dbReference type="HAMAP-Rule" id="MF_00514"/>
    </source>
</evidence>
<evidence type="ECO:0000305" key="2"/>
<name>RL35_ALCBS</name>
<gene>
    <name evidence="1" type="primary">rpmI</name>
    <name type="ordered locus">ABO_1840</name>
</gene>
<sequence length="64" mass="7468">MPKIKTNRGAAKRFKKTASGFKRKQAFKNHILTKKSSKTIRKLRPKQEVHENDVALVKRMMPYA</sequence>
<feature type="chain" id="PRO_0000258628" description="Large ribosomal subunit protein bL35">
    <location>
        <begin position="1"/>
        <end position="64"/>
    </location>
</feature>
<accession>Q0VNG0</accession>
<protein>
    <recommendedName>
        <fullName evidence="1">Large ribosomal subunit protein bL35</fullName>
    </recommendedName>
    <alternativeName>
        <fullName evidence="2">50S ribosomal protein L35</fullName>
    </alternativeName>
</protein>
<comment type="similarity">
    <text evidence="1">Belongs to the bacterial ribosomal protein bL35 family.</text>
</comment>
<proteinExistence type="inferred from homology"/>
<organism>
    <name type="scientific">Alcanivorax borkumensis (strain ATCC 700651 / DSM 11573 / NCIMB 13689 / SK2)</name>
    <dbReference type="NCBI Taxonomy" id="393595"/>
    <lineage>
        <taxon>Bacteria</taxon>
        <taxon>Pseudomonadati</taxon>
        <taxon>Pseudomonadota</taxon>
        <taxon>Gammaproteobacteria</taxon>
        <taxon>Oceanospirillales</taxon>
        <taxon>Alcanivoracaceae</taxon>
        <taxon>Alcanivorax</taxon>
    </lineage>
</organism>
<reference key="1">
    <citation type="journal article" date="2006" name="Nat. Biotechnol.">
        <title>Genome sequence of the ubiquitous hydrocarbon-degrading marine bacterium Alcanivorax borkumensis.</title>
        <authorList>
            <person name="Schneiker S."/>
            <person name="Martins dos Santos V.A.P."/>
            <person name="Bartels D."/>
            <person name="Bekel T."/>
            <person name="Brecht M."/>
            <person name="Buhrmester J."/>
            <person name="Chernikova T.N."/>
            <person name="Denaro R."/>
            <person name="Ferrer M."/>
            <person name="Gertler C."/>
            <person name="Goesmann A."/>
            <person name="Golyshina O.V."/>
            <person name="Kaminski F."/>
            <person name="Khachane A.N."/>
            <person name="Lang S."/>
            <person name="Linke B."/>
            <person name="McHardy A.C."/>
            <person name="Meyer F."/>
            <person name="Nechitaylo T."/>
            <person name="Puehler A."/>
            <person name="Regenhardt D."/>
            <person name="Rupp O."/>
            <person name="Sabirova J.S."/>
            <person name="Selbitschka W."/>
            <person name="Yakimov M.M."/>
            <person name="Timmis K.N."/>
            <person name="Vorhoelter F.-J."/>
            <person name="Weidner S."/>
            <person name="Kaiser O."/>
            <person name="Golyshin P.N."/>
        </authorList>
    </citation>
    <scope>NUCLEOTIDE SEQUENCE [LARGE SCALE GENOMIC DNA]</scope>
    <source>
        <strain>ATCC 700651 / DSM 11573 / NCIMB 13689 / SK2</strain>
    </source>
</reference>
<keyword id="KW-1185">Reference proteome</keyword>
<keyword id="KW-0687">Ribonucleoprotein</keyword>
<keyword id="KW-0689">Ribosomal protein</keyword>
<dbReference type="EMBL" id="AM286690">
    <property type="protein sequence ID" value="CAL17288.1"/>
    <property type="molecule type" value="Genomic_DNA"/>
</dbReference>
<dbReference type="RefSeq" id="WP_007149690.1">
    <property type="nucleotide sequence ID" value="NC_008260.1"/>
</dbReference>
<dbReference type="SMR" id="Q0VNG0"/>
<dbReference type="STRING" id="393595.ABO_1840"/>
<dbReference type="KEGG" id="abo:ABO_1840"/>
<dbReference type="eggNOG" id="COG0291">
    <property type="taxonomic scope" value="Bacteria"/>
</dbReference>
<dbReference type="HOGENOM" id="CLU_169643_1_1_6"/>
<dbReference type="OrthoDB" id="47476at2"/>
<dbReference type="Proteomes" id="UP000008871">
    <property type="component" value="Chromosome"/>
</dbReference>
<dbReference type="GO" id="GO:0022625">
    <property type="term" value="C:cytosolic large ribosomal subunit"/>
    <property type="evidence" value="ECO:0007669"/>
    <property type="project" value="TreeGrafter"/>
</dbReference>
<dbReference type="GO" id="GO:0003735">
    <property type="term" value="F:structural constituent of ribosome"/>
    <property type="evidence" value="ECO:0007669"/>
    <property type="project" value="InterPro"/>
</dbReference>
<dbReference type="GO" id="GO:0006412">
    <property type="term" value="P:translation"/>
    <property type="evidence" value="ECO:0007669"/>
    <property type="project" value="UniProtKB-UniRule"/>
</dbReference>
<dbReference type="FunFam" id="4.10.410.60:FF:000001">
    <property type="entry name" value="50S ribosomal protein L35"/>
    <property type="match status" value="1"/>
</dbReference>
<dbReference type="Gene3D" id="4.10.410.60">
    <property type="match status" value="1"/>
</dbReference>
<dbReference type="HAMAP" id="MF_00514">
    <property type="entry name" value="Ribosomal_bL35"/>
    <property type="match status" value="1"/>
</dbReference>
<dbReference type="InterPro" id="IPR001706">
    <property type="entry name" value="Ribosomal_bL35"/>
</dbReference>
<dbReference type="InterPro" id="IPR021137">
    <property type="entry name" value="Ribosomal_bL35-like"/>
</dbReference>
<dbReference type="InterPro" id="IPR018265">
    <property type="entry name" value="Ribosomal_bL35_CS"/>
</dbReference>
<dbReference type="InterPro" id="IPR037229">
    <property type="entry name" value="Ribosomal_bL35_sf"/>
</dbReference>
<dbReference type="NCBIfam" id="TIGR00001">
    <property type="entry name" value="rpmI_bact"/>
    <property type="match status" value="1"/>
</dbReference>
<dbReference type="PANTHER" id="PTHR33343">
    <property type="entry name" value="54S RIBOSOMAL PROTEIN BL35M"/>
    <property type="match status" value="1"/>
</dbReference>
<dbReference type="PANTHER" id="PTHR33343:SF1">
    <property type="entry name" value="LARGE RIBOSOMAL SUBUNIT PROTEIN BL35M"/>
    <property type="match status" value="1"/>
</dbReference>
<dbReference type="Pfam" id="PF01632">
    <property type="entry name" value="Ribosomal_L35p"/>
    <property type="match status" value="1"/>
</dbReference>
<dbReference type="PRINTS" id="PR00064">
    <property type="entry name" value="RIBOSOMALL35"/>
</dbReference>
<dbReference type="SUPFAM" id="SSF143034">
    <property type="entry name" value="L35p-like"/>
    <property type="match status" value="1"/>
</dbReference>
<dbReference type="PROSITE" id="PS00936">
    <property type="entry name" value="RIBOSOMAL_L35"/>
    <property type="match status" value="1"/>
</dbReference>